<reference key="1">
    <citation type="journal article" date="1999" name="Mol. Biol. Evol.">
        <title>Phylogenetic relationships of the enigmatic hoatzin (Opisthocomus hoazin) resolved using mitochondrial and nuclear gene sequences.</title>
        <authorList>
            <person name="Hughes J.M."/>
            <person name="Baker A.J."/>
        </authorList>
    </citation>
    <scope>NUCLEOTIDE SEQUENCE [GENOMIC DNA]</scope>
</reference>
<comment type="function">
    <text evidence="1 2">Subunit 8, of the mitochondrial membrane ATP synthase complex (F(1)F(0) ATP synthase or Complex V) that produces ATP from ADP in the presence of a proton gradient across the membrane which is generated by electron transport complexes of the respiratory chain. ATP synthase complex consist of a soluble F(1) head domain - the catalytic core - and a membrane F(1) domain - the membrane proton channel. These two domains are linked by a central stalk rotating inside the F(1) region and a stationary peripheral stalk. During catalysis, ATP synthesis in the catalytic domain of F(1) is coupled via a rotary mechanism of the central stalk subunits to proton translocation (By similarity). In vivo, can only synthesize ATP although its ATP hydrolase activity can be activated artificially in vitro (By similarity). Part of the complex F(0) domain (By similarity).</text>
</comment>
<comment type="subunit">
    <text evidence="1">Component of the ATP synthase complex composed at least of ATP5F1A/subunit alpha, ATP5F1B/subunit beta, ATP5MC1/subunit c (homooctomer), MT-ATP6/subunit a, MT-ATP8/subunit 8, ATP5ME/subunit e, ATP5MF/subunit f, ATP5MG/subunit g, ATP5MK/subunit k, ATP5MJ/subunit j, ATP5F1C/subunit gamma, ATP5F1D/subunit delta, ATP5F1E/subunit epsilon, ATP5PF/subunit F6, ATP5PB/subunit b, ATP5PD/subunit d, ATP5PO/subunit OSCP. ATP synthase complex consists of a soluble F(1) head domain (subunits alpha(3) and beta(3)) - the catalytic core - and a membrane F(0) domain - the membrane proton channel (subunits c, a, 8, e, f, g, k and j). These two domains are linked by a central stalk (subunits gamma, delta, and epsilon) rotating inside the F1 region and a stationary peripheral stalk (subunits F6, b, d, and OSCP).</text>
</comment>
<comment type="subcellular location">
    <subcellularLocation>
        <location>Mitochondrion membrane</location>
        <topology>Single-pass membrane protein</topology>
    </subcellularLocation>
</comment>
<comment type="similarity">
    <text evidence="4">Belongs to the ATPase protein 8 family.</text>
</comment>
<organism>
    <name type="scientific">Musophaga violacea</name>
    <name type="common">Violet turaco</name>
    <dbReference type="NCBI Taxonomy" id="103959"/>
    <lineage>
        <taxon>Eukaryota</taxon>
        <taxon>Metazoa</taxon>
        <taxon>Chordata</taxon>
        <taxon>Craniata</taxon>
        <taxon>Vertebrata</taxon>
        <taxon>Euteleostomi</taxon>
        <taxon>Archelosauria</taxon>
        <taxon>Archosauria</taxon>
        <taxon>Dinosauria</taxon>
        <taxon>Saurischia</taxon>
        <taxon>Theropoda</taxon>
        <taxon>Coelurosauria</taxon>
        <taxon>Aves</taxon>
        <taxon>Neognathae</taxon>
        <taxon>Neoaves</taxon>
        <taxon>Otidimorphae</taxon>
        <taxon>Musophagiformes</taxon>
        <taxon>Musophagidae</taxon>
        <taxon>Musophaga</taxon>
    </lineage>
</organism>
<accession>Q9TBI8</accession>
<name>ATP8_MUSVO</name>
<sequence length="55" mass="6518">MPQLNPNPWFYIMLMSWLTFSLIIQPELLSFTLTNPLSNKTSTTTRSSPWTWPWT</sequence>
<proteinExistence type="inferred from homology"/>
<evidence type="ECO:0000250" key="1">
    <source>
        <dbReference type="UniProtKB" id="P03928"/>
    </source>
</evidence>
<evidence type="ECO:0000250" key="2">
    <source>
        <dbReference type="UniProtKB" id="P19483"/>
    </source>
</evidence>
<evidence type="ECO:0000255" key="3"/>
<evidence type="ECO:0000305" key="4"/>
<keyword id="KW-0066">ATP synthesis</keyword>
<keyword id="KW-0138">CF(0)</keyword>
<keyword id="KW-0375">Hydrogen ion transport</keyword>
<keyword id="KW-0406">Ion transport</keyword>
<keyword id="KW-0472">Membrane</keyword>
<keyword id="KW-0496">Mitochondrion</keyword>
<keyword id="KW-0812">Transmembrane</keyword>
<keyword id="KW-1133">Transmembrane helix</keyword>
<keyword id="KW-0813">Transport</keyword>
<gene>
    <name evidence="1" type="primary">MT-ATP8</name>
    <name type="synonym">ATP8</name>
    <name type="synonym">ATPASE8</name>
    <name type="synonym">MTATP8</name>
</gene>
<dbReference type="EMBL" id="AF168037">
    <property type="protein sequence ID" value="AAD56465.1"/>
    <property type="molecule type" value="Genomic_DNA"/>
</dbReference>
<dbReference type="SMR" id="Q9TBI8"/>
<dbReference type="GO" id="GO:0031966">
    <property type="term" value="C:mitochondrial membrane"/>
    <property type="evidence" value="ECO:0007669"/>
    <property type="project" value="UniProtKB-SubCell"/>
</dbReference>
<dbReference type="GO" id="GO:0045259">
    <property type="term" value="C:proton-transporting ATP synthase complex"/>
    <property type="evidence" value="ECO:0007669"/>
    <property type="project" value="UniProtKB-KW"/>
</dbReference>
<dbReference type="GO" id="GO:0015078">
    <property type="term" value="F:proton transmembrane transporter activity"/>
    <property type="evidence" value="ECO:0007669"/>
    <property type="project" value="InterPro"/>
</dbReference>
<dbReference type="GO" id="GO:0015986">
    <property type="term" value="P:proton motive force-driven ATP synthesis"/>
    <property type="evidence" value="ECO:0007669"/>
    <property type="project" value="InterPro"/>
</dbReference>
<dbReference type="InterPro" id="IPR001421">
    <property type="entry name" value="ATP8_metazoa"/>
</dbReference>
<dbReference type="InterPro" id="IPR050635">
    <property type="entry name" value="ATPase_protein_8"/>
</dbReference>
<dbReference type="PANTHER" id="PTHR39937">
    <property type="entry name" value="ATP SYNTHASE PROTEIN 8"/>
    <property type="match status" value="1"/>
</dbReference>
<dbReference type="PANTHER" id="PTHR39937:SF1">
    <property type="entry name" value="ATP SYNTHASE PROTEIN 8"/>
    <property type="match status" value="1"/>
</dbReference>
<dbReference type="Pfam" id="PF00895">
    <property type="entry name" value="ATP-synt_8"/>
    <property type="match status" value="1"/>
</dbReference>
<geneLocation type="mitochondrion"/>
<feature type="chain" id="PRO_0000195552" description="ATP synthase F(0) complex subunit 8">
    <location>
        <begin position="1"/>
        <end position="55"/>
    </location>
</feature>
<feature type="transmembrane region" description="Helical" evidence="3">
    <location>
        <begin position="7"/>
        <end position="29"/>
    </location>
</feature>
<protein>
    <recommendedName>
        <fullName evidence="1">ATP synthase F(0) complex subunit 8</fullName>
    </recommendedName>
    <alternativeName>
        <fullName>A6L</fullName>
    </alternativeName>
    <alternativeName>
        <fullName>F-ATPase subunit 8</fullName>
    </alternativeName>
</protein>